<feature type="chain" id="PRO_0000382610" description="Cytosolic Fe-S cluster assembly factor Nubp1 homolog">
    <location>
        <begin position="1"/>
        <end position="310"/>
    </location>
</feature>
<feature type="binding site" evidence="2">
    <location>
        <position position="9"/>
    </location>
    <ligand>
        <name>[4Fe-4S] cluster</name>
        <dbReference type="ChEBI" id="CHEBI:49883"/>
        <label>1</label>
    </ligand>
</feature>
<feature type="binding site" evidence="2">
    <location>
        <position position="23"/>
    </location>
    <ligand>
        <name>[4Fe-4S] cluster</name>
        <dbReference type="ChEBI" id="CHEBI:49883"/>
        <label>1</label>
    </ligand>
</feature>
<feature type="binding site" evidence="2">
    <location>
        <position position="26"/>
    </location>
    <ligand>
        <name>[4Fe-4S] cluster</name>
        <dbReference type="ChEBI" id="CHEBI:49883"/>
        <label>1</label>
    </ligand>
</feature>
<feature type="binding site" evidence="2">
    <location>
        <position position="32"/>
    </location>
    <ligand>
        <name>[4Fe-4S] cluster</name>
        <dbReference type="ChEBI" id="CHEBI:49883"/>
        <label>1</label>
    </ligand>
</feature>
<feature type="binding site" evidence="2">
    <location>
        <begin position="63"/>
        <end position="70"/>
    </location>
    <ligand>
        <name>ATP</name>
        <dbReference type="ChEBI" id="CHEBI:30616"/>
    </ligand>
</feature>
<feature type="binding site" evidence="2">
    <location>
        <position position="240"/>
    </location>
    <ligand>
        <name>[4Fe-4S] cluster</name>
        <dbReference type="ChEBI" id="CHEBI:49883"/>
        <label>2</label>
        <note>ligand shared with heterodimeric partner</note>
    </ligand>
</feature>
<feature type="binding site" evidence="2">
    <location>
        <position position="243"/>
    </location>
    <ligand>
        <name>[4Fe-4S] cluster</name>
        <dbReference type="ChEBI" id="CHEBI:49883"/>
        <label>2</label>
        <note>ligand shared with heterodimeric partner</note>
    </ligand>
</feature>
<reference key="1">
    <citation type="journal article" date="2007" name="Nature">
        <title>Evolution of genes and genomes on the Drosophila phylogeny.</title>
        <authorList>
            <consortium name="Drosophila 12 genomes consortium"/>
        </authorList>
    </citation>
    <scope>NUCLEOTIDE SEQUENCE [LARGE SCALE GENOMIC DNA]</scope>
    <source>
        <strain>Tucson 15010-1051.87</strain>
    </source>
</reference>
<proteinExistence type="inferred from homology"/>
<accession>B4LUF5</accession>
<name>NUBP1_DROVI</name>
<protein>
    <recommendedName>
        <fullName evidence="2">Cytosolic Fe-S cluster assembly factor Nubp1 homolog</fullName>
    </recommendedName>
</protein>
<comment type="function">
    <text evidence="2">Component of the cytosolic iron-sulfur (Fe/S) protein assembly (CIA) machinery. Required for maturation of extramitochondrial Fe-S proteins. The Nubp1-Nubp2 heterotetramer forms a Fe-S scaffold complex, mediating the de novo assembly of an Fe-S cluster and its transfer to target apoproteins.</text>
</comment>
<comment type="cofactor">
    <cofactor evidence="2">
        <name>[4Fe-4S] cluster</name>
        <dbReference type="ChEBI" id="CHEBI:49883"/>
    </cofactor>
    <text evidence="2">Binds 4 [4Fe-4S] clusters per heterotetramer. Contains two stable clusters in the N-termini of Nubp1 and two labile, bridging clusters between subunits of the Nubp1-Nubp2 heterotetramer.</text>
</comment>
<comment type="subunit">
    <text evidence="2">Heterotetramer of 2 Nubp1 and 2 Nubp2 chains.</text>
</comment>
<comment type="subcellular location">
    <subcellularLocation>
        <location evidence="2">Cytoplasm</location>
    </subcellularLocation>
</comment>
<comment type="similarity">
    <text evidence="2">Belongs to the Mrp/NBP35 ATP-binding proteins family. NUBP1/NBP35 subfamily.</text>
</comment>
<gene>
    <name evidence="1" type="primary">Nubp1</name>
    <name type="ORF">GJ17301</name>
</gene>
<keyword id="KW-0004">4Fe-4S</keyword>
<keyword id="KW-0067">ATP-binding</keyword>
<keyword id="KW-0963">Cytoplasm</keyword>
<keyword id="KW-0408">Iron</keyword>
<keyword id="KW-0411">Iron-sulfur</keyword>
<keyword id="KW-0479">Metal-binding</keyword>
<keyword id="KW-0547">Nucleotide-binding</keyword>
<keyword id="KW-1185">Reference proteome</keyword>
<sequence length="310" mass="32955">MQAPPPEHCPGVESEQAGLVSACAGCPNQSICSDPSKKLEDPGKALVAAAMKDVKHKLLILSGKGGVGKSTVTTLLTRYLARSYPDNNFGVLDIDICGPSQPRLLGALGENVHQSGSGWSPVGIDDNVCLMSIGFLLGSVDDAVIWRGPKKNGMIRQFLSEVDWGNLDLLLLDTPPGTSDEHLSVVSYLRDDNAPESLHAIIVTTPQEVALLDVRKEINFCKKQRIPILGVIENMSSFRCGHCGNSSEIFPAKTGGAAAMCIEMDVPLLGSLPLDPLVTRSCDAGEDITAMRNETTEALATICSKIMSSL</sequence>
<dbReference type="EMBL" id="CH940649">
    <property type="protein sequence ID" value="EDW64141.1"/>
    <property type="molecule type" value="Genomic_DNA"/>
</dbReference>
<dbReference type="RefSeq" id="XP_002051986.1">
    <property type="nucleotide sequence ID" value="XM_002051950.4"/>
</dbReference>
<dbReference type="SMR" id="B4LUF5"/>
<dbReference type="FunCoup" id="B4LUF5">
    <property type="interactions" value="799"/>
</dbReference>
<dbReference type="STRING" id="7244.B4LUF5"/>
<dbReference type="EnsemblMetazoa" id="FBtr0233226">
    <property type="protein sequence ID" value="FBpp0231718"/>
    <property type="gene ID" value="FBgn0204474"/>
</dbReference>
<dbReference type="EnsemblMetazoa" id="XM_002051950.3">
    <property type="protein sequence ID" value="XP_002051986.1"/>
    <property type="gene ID" value="LOC6627702"/>
</dbReference>
<dbReference type="GeneID" id="6627702"/>
<dbReference type="KEGG" id="dvi:6627702"/>
<dbReference type="CTD" id="4682"/>
<dbReference type="eggNOG" id="KOG3022">
    <property type="taxonomic scope" value="Eukaryota"/>
</dbReference>
<dbReference type="HOGENOM" id="CLU_024839_0_1_1"/>
<dbReference type="InParanoid" id="B4LUF5"/>
<dbReference type="OMA" id="VSGCPMR"/>
<dbReference type="OrthoDB" id="1741334at2759"/>
<dbReference type="PhylomeDB" id="B4LUF5"/>
<dbReference type="Proteomes" id="UP000008792">
    <property type="component" value="Unassembled WGS sequence"/>
</dbReference>
<dbReference type="GO" id="GO:0005829">
    <property type="term" value="C:cytosol"/>
    <property type="evidence" value="ECO:0000250"/>
    <property type="project" value="UniProtKB"/>
</dbReference>
<dbReference type="GO" id="GO:0051539">
    <property type="term" value="F:4 iron, 4 sulfur cluster binding"/>
    <property type="evidence" value="ECO:0007669"/>
    <property type="project" value="UniProtKB-UniRule"/>
</dbReference>
<dbReference type="GO" id="GO:0005524">
    <property type="term" value="F:ATP binding"/>
    <property type="evidence" value="ECO:0007669"/>
    <property type="project" value="UniProtKB-KW"/>
</dbReference>
<dbReference type="GO" id="GO:0140663">
    <property type="term" value="F:ATP-dependent FeS chaperone activity"/>
    <property type="evidence" value="ECO:0007669"/>
    <property type="project" value="InterPro"/>
</dbReference>
<dbReference type="GO" id="GO:0051536">
    <property type="term" value="F:iron-sulfur cluster binding"/>
    <property type="evidence" value="ECO:0000250"/>
    <property type="project" value="UniProtKB"/>
</dbReference>
<dbReference type="GO" id="GO:0046872">
    <property type="term" value="F:metal ion binding"/>
    <property type="evidence" value="ECO:0007669"/>
    <property type="project" value="UniProtKB-KW"/>
</dbReference>
<dbReference type="GO" id="GO:0016226">
    <property type="term" value="P:iron-sulfur cluster assembly"/>
    <property type="evidence" value="ECO:0000250"/>
    <property type="project" value="UniProtKB"/>
</dbReference>
<dbReference type="CDD" id="cd02037">
    <property type="entry name" value="Mrp_NBP35"/>
    <property type="match status" value="1"/>
</dbReference>
<dbReference type="FunFam" id="3.40.50.300:FF:001759">
    <property type="entry name" value="Cytosolic Fe-S cluster assembly factor NUBP1 homolog"/>
    <property type="match status" value="1"/>
</dbReference>
<dbReference type="Gene3D" id="3.40.50.300">
    <property type="entry name" value="P-loop containing nucleotide triphosphate hydrolases"/>
    <property type="match status" value="1"/>
</dbReference>
<dbReference type="HAMAP" id="MF_02040">
    <property type="entry name" value="Mrp_NBP35"/>
    <property type="match status" value="1"/>
</dbReference>
<dbReference type="HAMAP" id="MF_03038">
    <property type="entry name" value="NUBP1"/>
    <property type="match status" value="1"/>
</dbReference>
<dbReference type="InterPro" id="IPR019591">
    <property type="entry name" value="Mrp/NBP35_ATP-bd"/>
</dbReference>
<dbReference type="InterPro" id="IPR028601">
    <property type="entry name" value="NUBP1/Nbp35"/>
</dbReference>
<dbReference type="InterPro" id="IPR027417">
    <property type="entry name" value="P-loop_NTPase"/>
</dbReference>
<dbReference type="InterPro" id="IPR033756">
    <property type="entry name" value="YlxH/NBP35"/>
</dbReference>
<dbReference type="PANTHER" id="PTHR23264:SF35">
    <property type="entry name" value="CYTOSOLIC FE-S CLUSTER ASSEMBLY FACTOR NUBP1"/>
    <property type="match status" value="1"/>
</dbReference>
<dbReference type="PANTHER" id="PTHR23264">
    <property type="entry name" value="NUCLEOTIDE-BINDING PROTEIN NBP35 YEAST -RELATED"/>
    <property type="match status" value="1"/>
</dbReference>
<dbReference type="Pfam" id="PF10609">
    <property type="entry name" value="ParA"/>
    <property type="match status" value="1"/>
</dbReference>
<dbReference type="SUPFAM" id="SSF52540">
    <property type="entry name" value="P-loop containing nucleoside triphosphate hydrolases"/>
    <property type="match status" value="1"/>
</dbReference>
<organism>
    <name type="scientific">Drosophila virilis</name>
    <name type="common">Fruit fly</name>
    <dbReference type="NCBI Taxonomy" id="7244"/>
    <lineage>
        <taxon>Eukaryota</taxon>
        <taxon>Metazoa</taxon>
        <taxon>Ecdysozoa</taxon>
        <taxon>Arthropoda</taxon>
        <taxon>Hexapoda</taxon>
        <taxon>Insecta</taxon>
        <taxon>Pterygota</taxon>
        <taxon>Neoptera</taxon>
        <taxon>Endopterygota</taxon>
        <taxon>Diptera</taxon>
        <taxon>Brachycera</taxon>
        <taxon>Muscomorpha</taxon>
        <taxon>Ephydroidea</taxon>
        <taxon>Drosophilidae</taxon>
        <taxon>Drosophila</taxon>
    </lineage>
</organism>
<evidence type="ECO:0000250" key="1">
    <source>
        <dbReference type="UniProtKB" id="Q9VJI9"/>
    </source>
</evidence>
<evidence type="ECO:0000255" key="2">
    <source>
        <dbReference type="HAMAP-Rule" id="MF_03038"/>
    </source>
</evidence>